<comment type="function">
    <text evidence="1">One of several proteins that assist in the late maturation steps of the functional core of the 30S ribosomal subunit. Associates with free 30S ribosomal subunits (but not with 30S subunits that are part of 70S ribosomes or polysomes). Required for efficient processing of 16S rRNA. May interact with the 5'-terminal helix region of 16S rRNA.</text>
</comment>
<comment type="subunit">
    <text evidence="1">Monomer. Binds 30S ribosomal subunits, but not 50S ribosomal subunits or 70S ribosomes.</text>
</comment>
<comment type="subcellular location">
    <subcellularLocation>
        <location evidence="1">Cytoplasm</location>
    </subcellularLocation>
</comment>
<comment type="similarity">
    <text evidence="1">Belongs to the RbfA family.</text>
</comment>
<keyword id="KW-0963">Cytoplasm</keyword>
<keyword id="KW-0690">Ribosome biogenesis</keyword>
<protein>
    <recommendedName>
        <fullName evidence="1">Ribosome-binding factor A</fullName>
    </recommendedName>
</protein>
<reference key="1">
    <citation type="journal article" date="2004" name="Proc. Natl. Acad. Sci. U.S.A.">
        <title>The genome sequence of the probiotic intestinal bacterium Lactobacillus johnsonii NCC 533.</title>
        <authorList>
            <person name="Pridmore R.D."/>
            <person name="Berger B."/>
            <person name="Desiere F."/>
            <person name="Vilanova D."/>
            <person name="Barretto C."/>
            <person name="Pittet A.-C."/>
            <person name="Zwahlen M.-C."/>
            <person name="Rouvet M."/>
            <person name="Altermann E."/>
            <person name="Barrangou R."/>
            <person name="Mollet B."/>
            <person name="Mercenier A."/>
            <person name="Klaenhammer T."/>
            <person name="Arigoni F."/>
            <person name="Schell M.A."/>
        </authorList>
    </citation>
    <scope>NUCLEOTIDE SEQUENCE [LARGE SCALE GENOMIC DNA]</scope>
    <source>
        <strain>CNCM I-1225 / La1 / NCC 533</strain>
    </source>
</reference>
<proteinExistence type="inferred from homology"/>
<dbReference type="EMBL" id="AE017198">
    <property type="protein sequence ID" value="AAS09254.1"/>
    <property type="molecule type" value="Genomic_DNA"/>
</dbReference>
<dbReference type="RefSeq" id="WP_004895256.1">
    <property type="nucleotide sequence ID" value="NC_005362.1"/>
</dbReference>
<dbReference type="SMR" id="Q74IS9"/>
<dbReference type="KEGG" id="ljo:LJ_1486"/>
<dbReference type="eggNOG" id="COG0858">
    <property type="taxonomic scope" value="Bacteria"/>
</dbReference>
<dbReference type="HOGENOM" id="CLU_089475_3_0_9"/>
<dbReference type="Proteomes" id="UP000000581">
    <property type="component" value="Chromosome"/>
</dbReference>
<dbReference type="GO" id="GO:0005829">
    <property type="term" value="C:cytosol"/>
    <property type="evidence" value="ECO:0007669"/>
    <property type="project" value="TreeGrafter"/>
</dbReference>
<dbReference type="GO" id="GO:0043024">
    <property type="term" value="F:ribosomal small subunit binding"/>
    <property type="evidence" value="ECO:0007669"/>
    <property type="project" value="TreeGrafter"/>
</dbReference>
<dbReference type="GO" id="GO:0030490">
    <property type="term" value="P:maturation of SSU-rRNA"/>
    <property type="evidence" value="ECO:0007669"/>
    <property type="project" value="UniProtKB-UniRule"/>
</dbReference>
<dbReference type="Gene3D" id="3.30.300.20">
    <property type="match status" value="1"/>
</dbReference>
<dbReference type="HAMAP" id="MF_00003">
    <property type="entry name" value="RbfA"/>
    <property type="match status" value="1"/>
</dbReference>
<dbReference type="InterPro" id="IPR015946">
    <property type="entry name" value="KH_dom-like_a/b"/>
</dbReference>
<dbReference type="InterPro" id="IPR000238">
    <property type="entry name" value="RbfA"/>
</dbReference>
<dbReference type="InterPro" id="IPR023799">
    <property type="entry name" value="RbfA_dom_sf"/>
</dbReference>
<dbReference type="InterPro" id="IPR020053">
    <property type="entry name" value="Ribosome-bd_factorA_CS"/>
</dbReference>
<dbReference type="NCBIfam" id="NF010391">
    <property type="entry name" value="PRK13818.1"/>
    <property type="match status" value="1"/>
</dbReference>
<dbReference type="NCBIfam" id="TIGR00082">
    <property type="entry name" value="rbfA"/>
    <property type="match status" value="1"/>
</dbReference>
<dbReference type="PANTHER" id="PTHR33515">
    <property type="entry name" value="RIBOSOME-BINDING FACTOR A, CHLOROPLASTIC-RELATED"/>
    <property type="match status" value="1"/>
</dbReference>
<dbReference type="PANTHER" id="PTHR33515:SF1">
    <property type="entry name" value="RIBOSOME-BINDING FACTOR A, CHLOROPLASTIC-RELATED"/>
    <property type="match status" value="1"/>
</dbReference>
<dbReference type="Pfam" id="PF02033">
    <property type="entry name" value="RBFA"/>
    <property type="match status" value="1"/>
</dbReference>
<dbReference type="SUPFAM" id="SSF89919">
    <property type="entry name" value="Ribosome-binding factor A, RbfA"/>
    <property type="match status" value="1"/>
</dbReference>
<dbReference type="PROSITE" id="PS01319">
    <property type="entry name" value="RBFA"/>
    <property type="match status" value="1"/>
</dbReference>
<sequence>MKHRIGRVEGEILRELTKILRKDIRDPRLNDVTITAVECTNDLSYATVYYSMLTDDPAKEKEVAEGLDKAKGMMRHLLGQTLTVYKVPELIFKRDTSVAYGSKIDKLINQVKKQDQERENKNK</sequence>
<accession>Q74IS9</accession>
<evidence type="ECO:0000255" key="1">
    <source>
        <dbReference type="HAMAP-Rule" id="MF_00003"/>
    </source>
</evidence>
<gene>
    <name evidence="1" type="primary">rbfA</name>
    <name type="ordered locus">LJ_1486</name>
</gene>
<organism>
    <name type="scientific">Lactobacillus johnsonii (strain CNCM I-12250 / La1 / NCC 533)</name>
    <dbReference type="NCBI Taxonomy" id="257314"/>
    <lineage>
        <taxon>Bacteria</taxon>
        <taxon>Bacillati</taxon>
        <taxon>Bacillota</taxon>
        <taxon>Bacilli</taxon>
        <taxon>Lactobacillales</taxon>
        <taxon>Lactobacillaceae</taxon>
        <taxon>Lactobacillus</taxon>
    </lineage>
</organism>
<name>RBFA_LACJO</name>
<feature type="chain" id="PRO_0000102676" description="Ribosome-binding factor A">
    <location>
        <begin position="1"/>
        <end position="123"/>
    </location>
</feature>